<accession>P09564</accession>
<evidence type="ECO:0000255" key="1">
    <source>
        <dbReference type="PROSITE-ProRule" id="PRU00114"/>
    </source>
</evidence>
<evidence type="ECO:0000256" key="2">
    <source>
        <dbReference type="SAM" id="MobiDB-lite"/>
    </source>
</evidence>
<evidence type="ECO:0000269" key="3">
    <source>
    </source>
</evidence>
<evidence type="ECO:0000269" key="4">
    <source>
    </source>
</evidence>
<evidence type="ECO:0000269" key="5">
    <source>
    </source>
</evidence>
<evidence type="ECO:0000269" key="6">
    <source>
    </source>
</evidence>
<evidence type="ECO:0000269" key="7">
    <source>
    </source>
</evidence>
<evidence type="ECO:0000305" key="8"/>
<evidence type="ECO:0000305" key="9">
    <source>
    </source>
</evidence>
<evidence type="ECO:0000305" key="10">
    <source>
    </source>
</evidence>
<proteinExistence type="evidence at protein level"/>
<dbReference type="EMBL" id="X06180">
    <property type="protein sequence ID" value="CAA29546.1"/>
    <property type="molecule type" value="mRNA"/>
</dbReference>
<dbReference type="EMBL" id="M37271">
    <property type="protein sequence ID" value="AAA51953.1"/>
    <property type="molecule type" value="Genomic_DNA"/>
</dbReference>
<dbReference type="EMBL" id="BT006696">
    <property type="protein sequence ID" value="AAP35342.1"/>
    <property type="molecule type" value="mRNA"/>
</dbReference>
<dbReference type="EMBL" id="BC009293">
    <property type="protein sequence ID" value="AAH09293.1"/>
    <property type="molecule type" value="mRNA"/>
</dbReference>
<dbReference type="EMBL" id="BC013297">
    <property type="protein sequence ID" value="AAH13297.1"/>
    <property type="molecule type" value="mRNA"/>
</dbReference>
<dbReference type="EMBL" id="D00749">
    <property type="protein sequence ID" value="BAA00646.1"/>
    <property type="molecule type" value="Genomic_DNA"/>
</dbReference>
<dbReference type="CCDS" id="CCDS11807.1"/>
<dbReference type="PIR" id="A39016">
    <property type="entry name" value="A39016"/>
</dbReference>
<dbReference type="RefSeq" id="NP_006128.1">
    <property type="nucleotide sequence ID" value="NM_006137.7"/>
</dbReference>
<dbReference type="SMR" id="P09564"/>
<dbReference type="BioGRID" id="107362">
    <property type="interactions" value="23"/>
</dbReference>
<dbReference type="FunCoup" id="P09564">
    <property type="interactions" value="601"/>
</dbReference>
<dbReference type="IntAct" id="P09564">
    <property type="interactions" value="19"/>
</dbReference>
<dbReference type="MINT" id="P09564"/>
<dbReference type="STRING" id="9606.ENSP00000312027"/>
<dbReference type="GlyCosmos" id="P09564">
    <property type="glycosylation" value="2 sites, No reported glycans"/>
</dbReference>
<dbReference type="GlyGen" id="P09564">
    <property type="glycosylation" value="2 sites, 5 N-linked glycans (1 site)"/>
</dbReference>
<dbReference type="iPTMnet" id="P09564"/>
<dbReference type="PhosphoSitePlus" id="P09564"/>
<dbReference type="SwissPalm" id="P09564"/>
<dbReference type="BioMuta" id="CD7"/>
<dbReference type="DMDM" id="116031"/>
<dbReference type="jPOST" id="P09564"/>
<dbReference type="MassIVE" id="P09564"/>
<dbReference type="PaxDb" id="9606-ENSP00000312027"/>
<dbReference type="PeptideAtlas" id="P09564"/>
<dbReference type="ProteomicsDB" id="52247"/>
<dbReference type="ABCD" id="P09564">
    <property type="antibodies" value="9 sequenced antibodies"/>
</dbReference>
<dbReference type="Antibodypedia" id="3610">
    <property type="antibodies" value="2129 antibodies from 52 providers"/>
</dbReference>
<dbReference type="DNASU" id="924"/>
<dbReference type="Ensembl" id="ENST00000312648.8">
    <property type="protein sequence ID" value="ENSP00000312027.3"/>
    <property type="gene ID" value="ENSG00000173762.9"/>
</dbReference>
<dbReference type="GeneID" id="924"/>
<dbReference type="KEGG" id="hsa:924"/>
<dbReference type="MANE-Select" id="ENST00000312648.8">
    <property type="protein sequence ID" value="ENSP00000312027.3"/>
    <property type="RefSeq nucleotide sequence ID" value="NM_006137.7"/>
    <property type="RefSeq protein sequence ID" value="NP_006128.1"/>
</dbReference>
<dbReference type="AGR" id="HGNC:1695"/>
<dbReference type="CTD" id="924"/>
<dbReference type="DisGeNET" id="924"/>
<dbReference type="GeneCards" id="CD7"/>
<dbReference type="HGNC" id="HGNC:1695">
    <property type="gene designation" value="CD7"/>
</dbReference>
<dbReference type="HPA" id="ENSG00000173762">
    <property type="expression patterns" value="Tissue enhanced (bone marrow, lymphoid tissue)"/>
</dbReference>
<dbReference type="MIM" id="186820">
    <property type="type" value="gene"/>
</dbReference>
<dbReference type="neXtProt" id="NX_P09564"/>
<dbReference type="OpenTargets" id="ENSG00000173762"/>
<dbReference type="PharmGKB" id="PA26234"/>
<dbReference type="VEuPathDB" id="HostDB:ENSG00000173762"/>
<dbReference type="eggNOG" id="ENOG502SD5I">
    <property type="taxonomic scope" value="Eukaryota"/>
</dbReference>
<dbReference type="GeneTree" id="ENSGT00390000013965"/>
<dbReference type="HOGENOM" id="CLU_115462_0_0_1"/>
<dbReference type="InParanoid" id="P09564"/>
<dbReference type="OMA" id="SACVVYE"/>
<dbReference type="OrthoDB" id="9899013at2759"/>
<dbReference type="PAN-GO" id="P09564">
    <property type="GO annotations" value="0 GO annotations based on evolutionary models"/>
</dbReference>
<dbReference type="PhylomeDB" id="P09564"/>
<dbReference type="TreeFam" id="TF338565"/>
<dbReference type="PathwayCommons" id="P09564"/>
<dbReference type="SignaLink" id="P09564"/>
<dbReference type="BioGRID-ORCS" id="924">
    <property type="hits" value="15 hits in 1144 CRISPR screens"/>
</dbReference>
<dbReference type="GeneWiki" id="CD7"/>
<dbReference type="GenomeRNAi" id="924"/>
<dbReference type="Pharos" id="P09564">
    <property type="development level" value="Tbio"/>
</dbReference>
<dbReference type="PRO" id="PR:P09564"/>
<dbReference type="Proteomes" id="UP000005640">
    <property type="component" value="Chromosome 17"/>
</dbReference>
<dbReference type="RNAct" id="P09564">
    <property type="molecule type" value="protein"/>
</dbReference>
<dbReference type="Bgee" id="ENSG00000173762">
    <property type="expression patterns" value="Expressed in granulocyte and 111 other cell types or tissues"/>
</dbReference>
<dbReference type="ExpressionAtlas" id="P09564">
    <property type="expression patterns" value="baseline and differential"/>
</dbReference>
<dbReference type="GO" id="GO:0016020">
    <property type="term" value="C:membrane"/>
    <property type="evidence" value="ECO:0000304"/>
    <property type="project" value="UniProtKB"/>
</dbReference>
<dbReference type="GO" id="GO:0005886">
    <property type="term" value="C:plasma membrane"/>
    <property type="evidence" value="ECO:0000304"/>
    <property type="project" value="ProtInc"/>
</dbReference>
<dbReference type="GO" id="GO:0038023">
    <property type="term" value="F:signaling receptor activity"/>
    <property type="evidence" value="ECO:0000304"/>
    <property type="project" value="UniProtKB"/>
</dbReference>
<dbReference type="GO" id="GO:0004888">
    <property type="term" value="F:transmembrane signaling receptor activity"/>
    <property type="evidence" value="ECO:0000314"/>
    <property type="project" value="UniProt"/>
</dbReference>
<dbReference type="GO" id="GO:0002250">
    <property type="term" value="P:adaptive immune response"/>
    <property type="evidence" value="ECO:0007669"/>
    <property type="project" value="UniProtKB-KW"/>
</dbReference>
<dbReference type="GO" id="GO:0007169">
    <property type="term" value="P:cell surface receptor protein tyrosine kinase signaling pathway"/>
    <property type="evidence" value="ECO:0000303"/>
    <property type="project" value="UniProtKB"/>
</dbReference>
<dbReference type="GO" id="GO:0006955">
    <property type="term" value="P:immune response"/>
    <property type="evidence" value="ECO:0000304"/>
    <property type="project" value="UniProtKB"/>
</dbReference>
<dbReference type="GO" id="GO:0002726">
    <property type="term" value="P:positive regulation of T cell cytokine production"/>
    <property type="evidence" value="ECO:0000314"/>
    <property type="project" value="UniProt"/>
</dbReference>
<dbReference type="GO" id="GO:0042110">
    <property type="term" value="P:T cell activation"/>
    <property type="evidence" value="ECO:0000304"/>
    <property type="project" value="UniProtKB"/>
</dbReference>
<dbReference type="CDD" id="cd00099">
    <property type="entry name" value="IgV"/>
    <property type="match status" value="1"/>
</dbReference>
<dbReference type="FunFam" id="2.60.40.10:FF:002197">
    <property type="entry name" value="T-cell antigen CD7"/>
    <property type="match status" value="1"/>
</dbReference>
<dbReference type="Gene3D" id="2.60.40.10">
    <property type="entry name" value="Immunoglobulins"/>
    <property type="match status" value="1"/>
</dbReference>
<dbReference type="InterPro" id="IPR039090">
    <property type="entry name" value="CD7"/>
</dbReference>
<dbReference type="InterPro" id="IPR007110">
    <property type="entry name" value="Ig-like_dom"/>
</dbReference>
<dbReference type="InterPro" id="IPR036179">
    <property type="entry name" value="Ig-like_dom_sf"/>
</dbReference>
<dbReference type="InterPro" id="IPR013783">
    <property type="entry name" value="Ig-like_fold"/>
</dbReference>
<dbReference type="InterPro" id="IPR003599">
    <property type="entry name" value="Ig_sub"/>
</dbReference>
<dbReference type="InterPro" id="IPR013106">
    <property type="entry name" value="Ig_V-set"/>
</dbReference>
<dbReference type="PANTHER" id="PTHR15343">
    <property type="entry name" value="CD7"/>
    <property type="match status" value="1"/>
</dbReference>
<dbReference type="PANTHER" id="PTHR15343:SF0">
    <property type="entry name" value="T-CELL ANTIGEN CD7"/>
    <property type="match status" value="1"/>
</dbReference>
<dbReference type="Pfam" id="PF07686">
    <property type="entry name" value="V-set"/>
    <property type="match status" value="1"/>
</dbReference>
<dbReference type="SMART" id="SM00409">
    <property type="entry name" value="IG"/>
    <property type="match status" value="1"/>
</dbReference>
<dbReference type="SMART" id="SM00406">
    <property type="entry name" value="IGv"/>
    <property type="match status" value="1"/>
</dbReference>
<dbReference type="SUPFAM" id="SSF48726">
    <property type="entry name" value="Immunoglobulin"/>
    <property type="match status" value="1"/>
</dbReference>
<dbReference type="PROSITE" id="PS50835">
    <property type="entry name" value="IG_LIKE"/>
    <property type="match status" value="1"/>
</dbReference>
<keyword id="KW-1064">Adaptive immunity</keyword>
<keyword id="KW-1015">Disulfide bond</keyword>
<keyword id="KW-0325">Glycoprotein</keyword>
<keyword id="KW-0391">Immunity</keyword>
<keyword id="KW-0393">Immunoglobulin domain</keyword>
<keyword id="KW-0449">Lipoprotein</keyword>
<keyword id="KW-0472">Membrane</keyword>
<keyword id="KW-0564">Palmitate</keyword>
<keyword id="KW-1267">Proteomics identification</keyword>
<keyword id="KW-0675">Receptor</keyword>
<keyword id="KW-1185">Reference proteome</keyword>
<keyword id="KW-0677">Repeat</keyword>
<keyword id="KW-0732">Signal</keyword>
<keyword id="KW-0812">Transmembrane</keyword>
<keyword id="KW-1133">Transmembrane helix</keyword>
<comment type="function">
    <text evidence="3 4 7">Transmembrane glycoprotein expressed by T-cells and natural killer (NK) cells and their precursors (PubMed:7506726). Plays a costimulatory role in T-cell activation upon binding to its ligand K12/SECTM1 (PubMed:10652336). In turn, mediates the production of cytokines such as IL-2 (PubMed:1709867). On resting NK-cells, CD7 activation results in a significant induction of interferon-gamma levels (PubMed:7506726).</text>
</comment>
<comment type="subunit">
    <text evidence="3">Interacts with SECTM1.</text>
</comment>
<comment type="interaction">
    <interactant intactId="EBI-2836587">
        <id>P09564</id>
    </interactant>
    <interactant intactId="EBI-1056751">
        <id>Q9Y3E5</id>
        <label>PTRH2</label>
    </interactant>
    <organismsDiffer>false</organismsDiffer>
    <experiments>3</experiments>
</comment>
<comment type="interaction">
    <interactant intactId="EBI-2836587">
        <id>P09564</id>
    </interactant>
    <interactant intactId="EBI-8652744">
        <id>Q96IW7</id>
        <label>SEC22A</label>
    </interactant>
    <organismsDiffer>false</organismsDiffer>
    <experiments>3</experiments>
</comment>
<comment type="subcellular location">
    <subcellularLocation>
        <location>Membrane</location>
        <topology>Single-pass type I membrane protein</topology>
    </subcellularLocation>
</comment>
<comment type="tissue specificity">
    <text evidence="4 7">Expressed on T-cells and natural killer (NK) cells and their precursors.</text>
</comment>
<gene>
    <name type="primary">CD7</name>
</gene>
<organism>
    <name type="scientific">Homo sapiens</name>
    <name type="common">Human</name>
    <dbReference type="NCBI Taxonomy" id="9606"/>
    <lineage>
        <taxon>Eukaryota</taxon>
        <taxon>Metazoa</taxon>
        <taxon>Chordata</taxon>
        <taxon>Craniata</taxon>
        <taxon>Vertebrata</taxon>
        <taxon>Euteleostomi</taxon>
        <taxon>Mammalia</taxon>
        <taxon>Eutheria</taxon>
        <taxon>Euarchontoglires</taxon>
        <taxon>Primates</taxon>
        <taxon>Haplorrhini</taxon>
        <taxon>Catarrhini</taxon>
        <taxon>Hominidae</taxon>
        <taxon>Homo</taxon>
    </lineage>
</organism>
<sequence>MAGPPRLLLLPLLLALARGLPGALAAQEVQQSPHCTTVPVGASVNITCSTSGGLRGIYLRQLGPQPQDIIYYEDGVVPTTDRRFRGRIDFSGSQDNLTITMHRLQLSDTGTYTCQAITEVNVYGSGTLVLVTEEQSQGWHRCSDAPPRASALPAPPTGSALPDPQTASALPDPPAASALPAALAVISFLLGLGLGVACVLARTQIKKLCSWRDKNSAACVVYEDMSHSRCNTLSSPNQYQ</sequence>
<reference key="1">
    <citation type="journal article" date="1987" name="EMBO J.">
        <title>Molecular cloning of two CD7 (T-cell leukemia antigen) cDNAs by a COS cell expression system.</title>
        <authorList>
            <person name="Aruffo A."/>
            <person name="Seed B."/>
        </authorList>
    </citation>
    <scope>NUCLEOTIDE SEQUENCE [MRNA]</scope>
    <scope>PALMITOYLATION AT CYS-198</scope>
</reference>
<reference key="2">
    <citation type="journal article" date="1991" name="Proc. Natl. Acad. Sci. U.S.A.">
        <title>Isolation and characterization of the genomic human CD7 gene: structural similarity with the murine Thy-1 gene.</title>
        <authorList>
            <person name="Schanberg L.E."/>
            <person name="Fleenor D.E."/>
            <person name="Kurtzberg J."/>
            <person name="Haynes B.F."/>
            <person name="Kaufman R.E."/>
        </authorList>
    </citation>
    <scope>NUCLEOTIDE SEQUENCE [GENOMIC DNA]</scope>
</reference>
<reference key="3">
    <citation type="submission" date="2003-05" db="EMBL/GenBank/DDBJ databases">
        <title>Cloning of human full-length CDSs in BD Creator(TM) system donor vector.</title>
        <authorList>
            <person name="Kalnine N."/>
            <person name="Chen X."/>
            <person name="Rolfs A."/>
            <person name="Halleck A."/>
            <person name="Hines L."/>
            <person name="Eisenstein S."/>
            <person name="Koundinya M."/>
            <person name="Raphael J."/>
            <person name="Moreira D."/>
            <person name="Kelley T."/>
            <person name="LaBaer J."/>
            <person name="Lin Y."/>
            <person name="Phelan M."/>
            <person name="Farmer A."/>
        </authorList>
    </citation>
    <scope>NUCLEOTIDE SEQUENCE [LARGE SCALE MRNA]</scope>
</reference>
<reference key="4">
    <citation type="journal article" date="2004" name="Genome Res.">
        <title>The status, quality, and expansion of the NIH full-length cDNA project: the Mammalian Gene Collection (MGC).</title>
        <authorList>
            <consortium name="The MGC Project Team"/>
        </authorList>
    </citation>
    <scope>NUCLEOTIDE SEQUENCE [LARGE SCALE MRNA]</scope>
    <source>
        <tissue>Muscle</tissue>
    </source>
</reference>
<reference key="5">
    <citation type="journal article" date="1991" name="Immunogenetics">
        <title>Molecular cloning of the gene coding for the human T cell differentiation antigen CD7.</title>
        <authorList>
            <person name="Yoshikawa K."/>
            <person name="Seto M."/>
            <person name="Ueda R."/>
            <person name="Obata Y."/>
            <person name="Notake K."/>
            <person name="Yokochi T."/>
            <person name="Takahashi T."/>
        </authorList>
    </citation>
    <scope>NUCLEOTIDE SEQUENCE [GENOMIC DNA] OF 205-240</scope>
</reference>
<reference key="6">
    <citation type="journal article" date="1989" name="J. Immunol.">
        <title>Characterization of the surface topography and putative tertiary structure of the human CD7 molecule.</title>
        <authorList>
            <person name="Ware R.E."/>
            <person name="Scearce R.M."/>
            <person name="Dietz M.A."/>
            <person name="Starmer C.F."/>
            <person name="Palker T.J."/>
            <person name="Haynes B.F."/>
        </authorList>
    </citation>
    <scope>TOPOLOGY</scope>
</reference>
<reference key="7">
    <citation type="journal article" date="1991" name="Eur. J. Immunol.">
        <title>Direct involvement of CD7 (gp40) in activation of TcR gamma/delta+ T cells.</title>
        <authorList>
            <person name="Carrel S."/>
            <person name="Salvi S."/>
            <person name="Rafti F."/>
            <person name="Favrot M."/>
            <person name="Rapin C."/>
            <person name="Sekaly R.P."/>
        </authorList>
    </citation>
    <scope>FUNCTION</scope>
</reference>
<reference key="8">
    <citation type="journal article" date="1994" name="J. Immunol.">
        <title>Expression and function of CD7 molecule on human natural killer cells.</title>
        <authorList>
            <person name="Rabinowich H."/>
            <person name="Pricop L."/>
            <person name="Herberman R.B."/>
            <person name="Whiteside T.L."/>
        </authorList>
    </citation>
    <scope>FUNCTION</scope>
    <scope>TISSUE SPECIFICITY</scope>
</reference>
<reference key="9">
    <citation type="journal article" date="2000" name="J. Biol. Chem.">
        <title>Identification of CD7 as a cognate of the human K12 (SECTM1) protein.</title>
        <authorList>
            <person name="Lyman S.D."/>
            <person name="Escobar S."/>
            <person name="Rousseau A.-M."/>
            <person name="Armstrong A."/>
            <person name="Fanslow W.C."/>
        </authorList>
    </citation>
    <scope>INTERACTION WITH SECTM1</scope>
    <scope>FUNCTION</scope>
</reference>
<reference key="10">
    <citation type="journal article" date="2009" name="J. Proteome Res.">
        <title>Glycoproteomics analysis of human liver tissue by combination of multiple enzyme digestion and hydrazide chemistry.</title>
        <authorList>
            <person name="Chen R."/>
            <person name="Jiang X."/>
            <person name="Sun D."/>
            <person name="Han G."/>
            <person name="Wang F."/>
            <person name="Ye M."/>
            <person name="Wang L."/>
            <person name="Zou H."/>
        </authorList>
    </citation>
    <scope>GLYCOSYLATION [LARGE SCALE ANALYSIS] AT ASN-96</scope>
    <source>
        <tissue>Liver</tissue>
    </source>
</reference>
<reference key="11">
    <citation type="journal article" date="2009" name="Nat. Biotechnol.">
        <title>Mass-spectrometric identification and relative quantification of N-linked cell surface glycoproteins.</title>
        <authorList>
            <person name="Wollscheid B."/>
            <person name="Bausch-Fluck D."/>
            <person name="Henderson C."/>
            <person name="O'Brien R."/>
            <person name="Bibel M."/>
            <person name="Schiess R."/>
            <person name="Aebersold R."/>
            <person name="Watts J.D."/>
        </authorList>
    </citation>
    <scope>GLYCOSYLATION [LARGE SCALE ANALYSIS] AT ASN-96</scope>
    <source>
        <tissue>Leukemic T-cell</tissue>
    </source>
</reference>
<reference key="12">
    <citation type="journal article" date="2009" name="Sci. Signal.">
        <title>Quantitative phosphoproteomic analysis of T cell receptor signaling reveals system-wide modulation of protein-protein interactions.</title>
        <authorList>
            <person name="Mayya V."/>
            <person name="Lundgren D.H."/>
            <person name="Hwang S.-I."/>
            <person name="Rezaul K."/>
            <person name="Wu L."/>
            <person name="Eng J.K."/>
            <person name="Rodionov V."/>
            <person name="Han D.K."/>
        </authorList>
    </citation>
    <scope>IDENTIFICATION BY MASS SPECTROMETRY [LARGE SCALE ANALYSIS]</scope>
    <source>
        <tissue>Leukemic T-cell</tissue>
    </source>
</reference>
<feature type="signal peptide">
    <location>
        <begin position="1"/>
        <end position="25"/>
    </location>
</feature>
<feature type="chain" id="PRO_0000014633" description="T-cell antigen CD7">
    <location>
        <begin position="26"/>
        <end position="240"/>
    </location>
</feature>
<feature type="topological domain" description="Extracellular" evidence="9">
    <location>
        <begin position="26"/>
        <end position="180"/>
    </location>
</feature>
<feature type="transmembrane region" description="Helical" evidence="8">
    <location>
        <begin position="181"/>
        <end position="201"/>
    </location>
</feature>
<feature type="topological domain" description="Cytoplasmic" evidence="9">
    <location>
        <begin position="202"/>
        <end position="240"/>
    </location>
</feature>
<feature type="domain" description="Ig-like">
    <location>
        <begin position="26"/>
        <end position="130"/>
    </location>
</feature>
<feature type="repeat" description="1">
    <location>
        <begin position="145"/>
        <end position="153"/>
    </location>
</feature>
<feature type="repeat" description="2">
    <location>
        <begin position="154"/>
        <end position="162"/>
    </location>
</feature>
<feature type="repeat" description="3">
    <location>
        <begin position="163"/>
        <end position="171"/>
    </location>
</feature>
<feature type="repeat" description="4">
    <location>
        <begin position="172"/>
        <end position="180"/>
    </location>
</feature>
<feature type="region of interest" description="Disordered" evidence="2">
    <location>
        <begin position="140"/>
        <end position="172"/>
    </location>
</feature>
<feature type="region of interest" description="4 X 9 AA tandem repeats, potential spacer function">
    <location>
        <begin position="145"/>
        <end position="180"/>
    </location>
</feature>
<feature type="lipid moiety-binding region" description="S-palmitoyl cysteine" evidence="10">
    <location>
        <position position="198"/>
    </location>
</feature>
<feature type="glycosylation site" description="N-linked (GlcNAc...) asparagine">
    <location>
        <position position="45"/>
    </location>
</feature>
<feature type="glycosylation site" description="N-linked (GlcNAc...) asparagine" evidence="5 6">
    <location>
        <position position="96"/>
    </location>
</feature>
<feature type="disulfide bond" evidence="1">
    <location>
        <begin position="35"/>
        <end position="142"/>
    </location>
</feature>
<feature type="disulfide bond" evidence="1">
    <location>
        <begin position="48"/>
        <end position="114"/>
    </location>
</feature>
<feature type="sequence variant" id="VAR_049855" description="In dbSNP:rs34579511.">
    <original>T</original>
    <variation>A</variation>
    <location>
        <position position="113"/>
    </location>
</feature>
<name>CD7_HUMAN</name>
<protein>
    <recommendedName>
        <fullName>T-cell antigen CD7</fullName>
    </recommendedName>
    <alternativeName>
        <fullName>GP40</fullName>
    </alternativeName>
    <alternativeName>
        <fullName>T-cell leukemia antigen</fullName>
    </alternativeName>
    <alternativeName>
        <fullName>T-cell surface antigen Leu-9</fullName>
    </alternativeName>
    <alternativeName>
        <fullName>TP41</fullName>
    </alternativeName>
    <cdAntigenName>CD7</cdAntigenName>
</protein>